<feature type="chain" id="PRO_0000060513" description="tRNA (guanine(9)-N1)-methyltransferase">
    <location>
        <begin position="1"/>
        <end position="390"/>
    </location>
</feature>
<feature type="domain" description="SAM-dependent MTase TRM10-type" evidence="3">
    <location>
        <begin position="92"/>
        <end position="340"/>
    </location>
</feature>
<feature type="region of interest" description="Disordered" evidence="4">
    <location>
        <begin position="1"/>
        <end position="72"/>
    </location>
</feature>
<feature type="region of interest" description="Disordered" evidence="4">
    <location>
        <begin position="343"/>
        <end position="390"/>
    </location>
</feature>
<feature type="compositionally biased region" description="Basic and acidic residues" evidence="4">
    <location>
        <begin position="43"/>
        <end position="59"/>
    </location>
</feature>
<feature type="compositionally biased region" description="Basic and acidic residues" evidence="4">
    <location>
        <begin position="347"/>
        <end position="356"/>
    </location>
</feature>
<feature type="compositionally biased region" description="Acidic residues" evidence="4">
    <location>
        <begin position="357"/>
        <end position="390"/>
    </location>
</feature>
<feature type="active site" description="Proton acceptor" evidence="1">
    <location>
        <position position="270"/>
    </location>
</feature>
<feature type="binding site" evidence="2">
    <location>
        <begin position="246"/>
        <end position="247"/>
    </location>
    <ligand>
        <name>S-adenosyl-L-methionine</name>
        <dbReference type="ChEBI" id="CHEBI:59789"/>
    </ligand>
</feature>
<feature type="binding site" evidence="2">
    <location>
        <position position="266"/>
    </location>
    <ligand>
        <name>S-adenosyl-L-methionine</name>
        <dbReference type="ChEBI" id="CHEBI:59789"/>
    </ligand>
</feature>
<feature type="binding site" evidence="2">
    <location>
        <begin position="270"/>
        <end position="274"/>
    </location>
    <ligand>
        <name>S-adenosyl-L-methionine</name>
        <dbReference type="ChEBI" id="CHEBI:59789"/>
    </ligand>
</feature>
<feature type="binding site" evidence="2">
    <location>
        <position position="278"/>
    </location>
    <ligand>
        <name>S-adenosyl-L-methionine</name>
        <dbReference type="ChEBI" id="CHEBI:59789"/>
    </ligand>
</feature>
<feature type="binding site" evidence="2">
    <location>
        <position position="292"/>
    </location>
    <ligand>
        <name>S-adenosyl-L-methionine</name>
        <dbReference type="ChEBI" id="CHEBI:59789"/>
    </ligand>
</feature>
<feature type="binding site" evidence="2">
    <location>
        <begin position="305"/>
        <end position="307"/>
    </location>
    <ligand>
        <name>S-adenosyl-L-methionine</name>
        <dbReference type="ChEBI" id="CHEBI:59789"/>
    </ligand>
</feature>
<keyword id="KW-0963">Cytoplasm</keyword>
<keyword id="KW-0489">Methyltransferase</keyword>
<keyword id="KW-0539">Nucleus</keyword>
<keyword id="KW-1185">Reference proteome</keyword>
<keyword id="KW-0949">S-adenosyl-L-methionine</keyword>
<keyword id="KW-0808">Transferase</keyword>
<keyword id="KW-0819">tRNA processing</keyword>
<evidence type="ECO:0000250" key="1">
    <source>
        <dbReference type="UniProtKB" id="O14214"/>
    </source>
</evidence>
<evidence type="ECO:0000250" key="2">
    <source>
        <dbReference type="UniProtKB" id="Q12400"/>
    </source>
</evidence>
<evidence type="ECO:0000255" key="3">
    <source>
        <dbReference type="PROSITE-ProRule" id="PRU01012"/>
    </source>
</evidence>
<evidence type="ECO:0000256" key="4">
    <source>
        <dbReference type="SAM" id="MobiDB-lite"/>
    </source>
</evidence>
<proteinExistence type="inferred from homology"/>
<protein>
    <recommendedName>
        <fullName evidence="2">tRNA (guanine(9)-N1)-methyltransferase</fullName>
        <ecNumber evidence="2">2.1.1.221</ecNumber>
    </recommendedName>
    <alternativeName>
        <fullName evidence="2">tRNA methyltransferase 10</fullName>
    </alternativeName>
    <alternativeName>
        <fullName evidence="2">tRNA(m1G9)-methyltransferase</fullName>
        <shortName evidence="2">tRNA(m1G9)MTase</shortName>
    </alternativeName>
</protein>
<sequence>MDIDEESYLNAGPSAPSKIPQGGEGDRLQGMSKKAMKRAAKQARLEEIKPLKRAAERERRRQRTAQLAEGYAAGTLSEADKELVERRRRVEKERKEAQRRIESGDQANDWLGGVVIDLGFDDLMTDQEIASMAQQLGYLYSSNRTAEKPVRTVIHTTFSPAASPRLWQRMENFNWHKWSRCHWWEQGLETLKSQLDPSTSILSVQSVVSKETQDKAGIDTKSLLSRLTGPQVPVDLQAGKHKLVYLSADAEDELLSLSEDEIYIIGGIVDRNRHKNLCQGKAEQLGIRTARLPIGTFLEMLPTRKVLTVNQVFDILVKYLHLGDWAAAFEAVIPIRKYAPGRKTKRAKTETKRNEKEEEEVECTSAEGEEDIGVIEESAEVDPEDVFSNQ</sequence>
<gene>
    <name evidence="2" type="primary">TRM10</name>
    <name type="ordered locus">CNC05170</name>
</gene>
<organism>
    <name type="scientific">Cryptococcus neoformans var. neoformans serotype D (strain JEC21 / ATCC MYA-565)</name>
    <name type="common">Filobasidiella neoformans</name>
    <dbReference type="NCBI Taxonomy" id="214684"/>
    <lineage>
        <taxon>Eukaryota</taxon>
        <taxon>Fungi</taxon>
        <taxon>Dikarya</taxon>
        <taxon>Basidiomycota</taxon>
        <taxon>Agaricomycotina</taxon>
        <taxon>Tremellomycetes</taxon>
        <taxon>Tremellales</taxon>
        <taxon>Cryptococcaceae</taxon>
        <taxon>Cryptococcus</taxon>
        <taxon>Cryptococcus neoformans species complex</taxon>
    </lineage>
</organism>
<name>TRM10_CRYNJ</name>
<comment type="function">
    <text evidence="2">S-adenosyl-L-methionine-dependent guanine N(1)-methyltransferase that catalyzes the formation of N(1)-methylguanine at position 9 (m1G9) in cytoplasmic tRNA.</text>
</comment>
<comment type="catalytic activity">
    <reaction evidence="2">
        <text>guanosine(9) in tRNA + S-adenosyl-L-methionine = N(1)-methylguanosine(9) in tRNA + S-adenosyl-L-homocysteine + H(+)</text>
        <dbReference type="Rhea" id="RHEA:43156"/>
        <dbReference type="Rhea" id="RHEA-COMP:10367"/>
        <dbReference type="Rhea" id="RHEA-COMP:10368"/>
        <dbReference type="ChEBI" id="CHEBI:15378"/>
        <dbReference type="ChEBI" id="CHEBI:57856"/>
        <dbReference type="ChEBI" id="CHEBI:59789"/>
        <dbReference type="ChEBI" id="CHEBI:73542"/>
        <dbReference type="ChEBI" id="CHEBI:74269"/>
        <dbReference type="EC" id="2.1.1.221"/>
    </reaction>
</comment>
<comment type="subunit">
    <text evidence="1">Monomer.</text>
</comment>
<comment type="subcellular location">
    <subcellularLocation>
        <location evidence="2">Cytoplasm</location>
    </subcellularLocation>
    <subcellularLocation>
        <location evidence="2">Nucleus</location>
    </subcellularLocation>
</comment>
<comment type="similarity">
    <text evidence="3">Belongs to the class IV-like SAM-binding methyltransferase superfamily. TRM10 family.</text>
</comment>
<accession>P0CS10</accession>
<accession>Q55WD7</accession>
<accession>Q5KJW1</accession>
<dbReference type="EC" id="2.1.1.221" evidence="2"/>
<dbReference type="EMBL" id="AE017343">
    <property type="protein sequence ID" value="AAW42557.2"/>
    <property type="molecule type" value="Genomic_DNA"/>
</dbReference>
<dbReference type="RefSeq" id="XP_569864.1">
    <property type="nucleotide sequence ID" value="XM_569864.1"/>
</dbReference>
<dbReference type="SMR" id="P0CS10"/>
<dbReference type="FunCoup" id="P0CS10">
    <property type="interactions" value="618"/>
</dbReference>
<dbReference type="STRING" id="214684.P0CS10"/>
<dbReference type="PaxDb" id="214684-P0CS10"/>
<dbReference type="EnsemblFungi" id="AAW42557">
    <property type="protein sequence ID" value="AAW42557"/>
    <property type="gene ID" value="CNC05170"/>
</dbReference>
<dbReference type="GeneID" id="3256197"/>
<dbReference type="KEGG" id="cne:CNC05170"/>
<dbReference type="eggNOG" id="KOG2967">
    <property type="taxonomic scope" value="Eukaryota"/>
</dbReference>
<dbReference type="HOGENOM" id="CLU_034384_1_1_1"/>
<dbReference type="InParanoid" id="P0CS10"/>
<dbReference type="OrthoDB" id="278300at2759"/>
<dbReference type="Proteomes" id="UP000002149">
    <property type="component" value="Chromosome 3"/>
</dbReference>
<dbReference type="GO" id="GO:0005737">
    <property type="term" value="C:cytoplasm"/>
    <property type="evidence" value="ECO:0007669"/>
    <property type="project" value="UniProtKB-SubCell"/>
</dbReference>
<dbReference type="GO" id="GO:0005634">
    <property type="term" value="C:nucleus"/>
    <property type="evidence" value="ECO:0000318"/>
    <property type="project" value="GO_Central"/>
</dbReference>
<dbReference type="GO" id="GO:0052905">
    <property type="term" value="F:tRNA (guanosine(9)-N1)-methyltransferase activity"/>
    <property type="evidence" value="ECO:0007669"/>
    <property type="project" value="UniProtKB-EC"/>
</dbReference>
<dbReference type="GO" id="GO:0000049">
    <property type="term" value="F:tRNA binding"/>
    <property type="evidence" value="ECO:0000318"/>
    <property type="project" value="GO_Central"/>
</dbReference>
<dbReference type="GO" id="GO:0002939">
    <property type="term" value="P:tRNA N1-guanine methylation"/>
    <property type="evidence" value="ECO:0000318"/>
    <property type="project" value="GO_Central"/>
</dbReference>
<dbReference type="CDD" id="cd18089">
    <property type="entry name" value="SPOUT_Trm10-like"/>
    <property type="match status" value="1"/>
</dbReference>
<dbReference type="Gene3D" id="3.40.1280.30">
    <property type="match status" value="1"/>
</dbReference>
<dbReference type="InterPro" id="IPR028564">
    <property type="entry name" value="MT_TRM10-typ"/>
</dbReference>
<dbReference type="InterPro" id="IPR038459">
    <property type="entry name" value="MT_TRM10-typ_sf"/>
</dbReference>
<dbReference type="InterPro" id="IPR007356">
    <property type="entry name" value="tRNA_m1G_MeTrfase_euk"/>
</dbReference>
<dbReference type="InterPro" id="IPR016009">
    <property type="entry name" value="tRNA_MeTrfase_TRMD/TRM10"/>
</dbReference>
<dbReference type="PANTHER" id="PTHR13563">
    <property type="entry name" value="TRNA (GUANINE-9-) METHYLTRANSFERASE"/>
    <property type="match status" value="1"/>
</dbReference>
<dbReference type="PANTHER" id="PTHR13563:SF13">
    <property type="entry name" value="TRNA METHYLTRANSFERASE 10 HOMOLOG A"/>
    <property type="match status" value="1"/>
</dbReference>
<dbReference type="Pfam" id="PF01746">
    <property type="entry name" value="tRNA_m1G_MT"/>
    <property type="match status" value="1"/>
</dbReference>
<dbReference type="PROSITE" id="PS51675">
    <property type="entry name" value="SAM_MT_TRM10"/>
    <property type="match status" value="1"/>
</dbReference>
<reference key="1">
    <citation type="journal article" date="2005" name="Science">
        <title>The genome of the basidiomycetous yeast and human pathogen Cryptococcus neoformans.</title>
        <authorList>
            <person name="Loftus B.J."/>
            <person name="Fung E."/>
            <person name="Roncaglia P."/>
            <person name="Rowley D."/>
            <person name="Amedeo P."/>
            <person name="Bruno D."/>
            <person name="Vamathevan J."/>
            <person name="Miranda M."/>
            <person name="Anderson I.J."/>
            <person name="Fraser J.A."/>
            <person name="Allen J.E."/>
            <person name="Bosdet I.E."/>
            <person name="Brent M.R."/>
            <person name="Chiu R."/>
            <person name="Doering T.L."/>
            <person name="Donlin M.J."/>
            <person name="D'Souza C.A."/>
            <person name="Fox D.S."/>
            <person name="Grinberg V."/>
            <person name="Fu J."/>
            <person name="Fukushima M."/>
            <person name="Haas B.J."/>
            <person name="Huang J.C."/>
            <person name="Janbon G."/>
            <person name="Jones S.J.M."/>
            <person name="Koo H.L."/>
            <person name="Krzywinski M.I."/>
            <person name="Kwon-Chung K.J."/>
            <person name="Lengeler K.B."/>
            <person name="Maiti R."/>
            <person name="Marra M.A."/>
            <person name="Marra R.E."/>
            <person name="Mathewson C.A."/>
            <person name="Mitchell T.G."/>
            <person name="Pertea M."/>
            <person name="Riggs F.R."/>
            <person name="Salzberg S.L."/>
            <person name="Schein J.E."/>
            <person name="Shvartsbeyn A."/>
            <person name="Shin H."/>
            <person name="Shumway M."/>
            <person name="Specht C.A."/>
            <person name="Suh B.B."/>
            <person name="Tenney A."/>
            <person name="Utterback T.R."/>
            <person name="Wickes B.L."/>
            <person name="Wortman J.R."/>
            <person name="Wye N.H."/>
            <person name="Kronstad J.W."/>
            <person name="Lodge J.K."/>
            <person name="Heitman J."/>
            <person name="Davis R.W."/>
            <person name="Fraser C.M."/>
            <person name="Hyman R.W."/>
        </authorList>
    </citation>
    <scope>NUCLEOTIDE SEQUENCE [LARGE SCALE GENOMIC DNA]</scope>
    <source>
        <strain>JEC21 / ATCC MYA-565</strain>
    </source>
</reference>